<accession>C1L2R1</accession>
<feature type="chain" id="PRO_1000203274" description="Elongation factor P">
    <location>
        <begin position="1"/>
        <end position="185"/>
    </location>
</feature>
<proteinExistence type="inferred from homology"/>
<keyword id="KW-0963">Cytoplasm</keyword>
<keyword id="KW-0251">Elongation factor</keyword>
<keyword id="KW-0648">Protein biosynthesis</keyword>
<comment type="function">
    <text evidence="1">Involved in peptide bond synthesis. Stimulates efficient translation and peptide-bond synthesis on native or reconstituted 70S ribosomes in vitro. Probably functions indirectly by altering the affinity of the ribosome for aminoacyl-tRNA, thus increasing their reactivity as acceptors for peptidyl transferase.</text>
</comment>
<comment type="pathway">
    <text evidence="1">Protein biosynthesis; polypeptide chain elongation.</text>
</comment>
<comment type="subcellular location">
    <subcellularLocation>
        <location evidence="1">Cytoplasm</location>
    </subcellularLocation>
</comment>
<comment type="similarity">
    <text evidence="1">Belongs to the elongation factor P family.</text>
</comment>
<gene>
    <name evidence="1" type="primary">efp</name>
    <name type="ordered locus">Lm4b_01363</name>
</gene>
<evidence type="ECO:0000255" key="1">
    <source>
        <dbReference type="HAMAP-Rule" id="MF_00141"/>
    </source>
</evidence>
<protein>
    <recommendedName>
        <fullName evidence="1">Elongation factor P</fullName>
        <shortName evidence="1">EF-P</shortName>
    </recommendedName>
</protein>
<organism>
    <name type="scientific">Listeria monocytogenes serotype 4b (strain CLIP80459)</name>
    <dbReference type="NCBI Taxonomy" id="568819"/>
    <lineage>
        <taxon>Bacteria</taxon>
        <taxon>Bacillati</taxon>
        <taxon>Bacillota</taxon>
        <taxon>Bacilli</taxon>
        <taxon>Bacillales</taxon>
        <taxon>Listeriaceae</taxon>
        <taxon>Listeria</taxon>
    </lineage>
</organism>
<sequence>MISVNDFKTGLTIEVDNGIWRVLDFQHVKPGKGAAFVRSKLRNLRTGAIQEKTFRGGEKVAKAQIDNRKMAYLYADGTNHVFMDNESYEQIELPEDQIAHELKFLKENMEINIIMYQGETIGIDLPNTVELVVTATDPGIKGDTSSGGSKPATLETGLVVQVPFFVNEGDKLVINTTEAAYVSRA</sequence>
<dbReference type="EMBL" id="FM242711">
    <property type="protein sequence ID" value="CAS05127.1"/>
    <property type="molecule type" value="Genomic_DNA"/>
</dbReference>
<dbReference type="RefSeq" id="WP_003722482.1">
    <property type="nucleotide sequence ID" value="NC_012488.1"/>
</dbReference>
<dbReference type="SMR" id="C1L2R1"/>
<dbReference type="GeneID" id="93234772"/>
<dbReference type="KEGG" id="lmc:Lm4b_01363"/>
<dbReference type="HOGENOM" id="CLU_074944_0_1_9"/>
<dbReference type="UniPathway" id="UPA00345"/>
<dbReference type="GO" id="GO:0005737">
    <property type="term" value="C:cytoplasm"/>
    <property type="evidence" value="ECO:0007669"/>
    <property type="project" value="UniProtKB-SubCell"/>
</dbReference>
<dbReference type="GO" id="GO:0003746">
    <property type="term" value="F:translation elongation factor activity"/>
    <property type="evidence" value="ECO:0007669"/>
    <property type="project" value="UniProtKB-UniRule"/>
</dbReference>
<dbReference type="GO" id="GO:0043043">
    <property type="term" value="P:peptide biosynthetic process"/>
    <property type="evidence" value="ECO:0007669"/>
    <property type="project" value="InterPro"/>
</dbReference>
<dbReference type="CDD" id="cd04470">
    <property type="entry name" value="S1_EF-P_repeat_1"/>
    <property type="match status" value="1"/>
</dbReference>
<dbReference type="CDD" id="cd05794">
    <property type="entry name" value="S1_EF-P_repeat_2"/>
    <property type="match status" value="1"/>
</dbReference>
<dbReference type="FunFam" id="2.30.30.30:FF:000010">
    <property type="entry name" value="Elongation factor P"/>
    <property type="match status" value="1"/>
</dbReference>
<dbReference type="FunFam" id="2.40.50.140:FF:000004">
    <property type="entry name" value="Elongation factor P"/>
    <property type="match status" value="1"/>
</dbReference>
<dbReference type="FunFam" id="2.40.50.140:FF:000009">
    <property type="entry name" value="Elongation factor P"/>
    <property type="match status" value="1"/>
</dbReference>
<dbReference type="Gene3D" id="2.30.30.30">
    <property type="match status" value="1"/>
</dbReference>
<dbReference type="Gene3D" id="2.40.50.140">
    <property type="entry name" value="Nucleic acid-binding proteins"/>
    <property type="match status" value="2"/>
</dbReference>
<dbReference type="HAMAP" id="MF_00141">
    <property type="entry name" value="EF_P"/>
    <property type="match status" value="1"/>
</dbReference>
<dbReference type="InterPro" id="IPR015365">
    <property type="entry name" value="Elong-fact-P_C"/>
</dbReference>
<dbReference type="InterPro" id="IPR012340">
    <property type="entry name" value="NA-bd_OB-fold"/>
</dbReference>
<dbReference type="InterPro" id="IPR014722">
    <property type="entry name" value="Rib_uL2_dom2"/>
</dbReference>
<dbReference type="InterPro" id="IPR020599">
    <property type="entry name" value="Transl_elong_fac_P/YeiP"/>
</dbReference>
<dbReference type="InterPro" id="IPR013185">
    <property type="entry name" value="Transl_elong_KOW-like"/>
</dbReference>
<dbReference type="InterPro" id="IPR001059">
    <property type="entry name" value="Transl_elong_P/YeiP_cen"/>
</dbReference>
<dbReference type="InterPro" id="IPR013852">
    <property type="entry name" value="Transl_elong_P/YeiP_CS"/>
</dbReference>
<dbReference type="InterPro" id="IPR011768">
    <property type="entry name" value="Transl_elongation_fac_P"/>
</dbReference>
<dbReference type="InterPro" id="IPR008991">
    <property type="entry name" value="Translation_prot_SH3-like_sf"/>
</dbReference>
<dbReference type="NCBIfam" id="TIGR00038">
    <property type="entry name" value="efp"/>
    <property type="match status" value="1"/>
</dbReference>
<dbReference type="NCBIfam" id="NF001810">
    <property type="entry name" value="PRK00529.1"/>
    <property type="match status" value="1"/>
</dbReference>
<dbReference type="PANTHER" id="PTHR30053">
    <property type="entry name" value="ELONGATION FACTOR P"/>
    <property type="match status" value="1"/>
</dbReference>
<dbReference type="PANTHER" id="PTHR30053:SF12">
    <property type="entry name" value="ELONGATION FACTOR P (EF-P) FAMILY PROTEIN"/>
    <property type="match status" value="1"/>
</dbReference>
<dbReference type="Pfam" id="PF01132">
    <property type="entry name" value="EFP"/>
    <property type="match status" value="1"/>
</dbReference>
<dbReference type="Pfam" id="PF08207">
    <property type="entry name" value="EFP_N"/>
    <property type="match status" value="1"/>
</dbReference>
<dbReference type="Pfam" id="PF09285">
    <property type="entry name" value="Elong-fact-P_C"/>
    <property type="match status" value="1"/>
</dbReference>
<dbReference type="PIRSF" id="PIRSF005901">
    <property type="entry name" value="EF-P"/>
    <property type="match status" value="1"/>
</dbReference>
<dbReference type="SMART" id="SM01185">
    <property type="entry name" value="EFP"/>
    <property type="match status" value="1"/>
</dbReference>
<dbReference type="SMART" id="SM00841">
    <property type="entry name" value="Elong-fact-P_C"/>
    <property type="match status" value="1"/>
</dbReference>
<dbReference type="SUPFAM" id="SSF50249">
    <property type="entry name" value="Nucleic acid-binding proteins"/>
    <property type="match status" value="2"/>
</dbReference>
<dbReference type="SUPFAM" id="SSF50104">
    <property type="entry name" value="Translation proteins SH3-like domain"/>
    <property type="match status" value="1"/>
</dbReference>
<dbReference type="PROSITE" id="PS01275">
    <property type="entry name" value="EFP"/>
    <property type="match status" value="1"/>
</dbReference>
<name>EFP_LISMC</name>
<reference key="1">
    <citation type="journal article" date="2012" name="BMC Genomics">
        <title>Comparative genomics and transcriptomics of lineages I, II, and III strains of Listeria monocytogenes.</title>
        <authorList>
            <person name="Hain T."/>
            <person name="Ghai R."/>
            <person name="Billion A."/>
            <person name="Kuenne C.T."/>
            <person name="Steinweg C."/>
            <person name="Izar B."/>
            <person name="Mohamed W."/>
            <person name="Mraheil M."/>
            <person name="Domann E."/>
            <person name="Schaffrath S."/>
            <person name="Karst U."/>
            <person name="Goesmann A."/>
            <person name="Oehm S."/>
            <person name="Puhler A."/>
            <person name="Merkl R."/>
            <person name="Vorwerk S."/>
            <person name="Glaser P."/>
            <person name="Garrido P."/>
            <person name="Rusniok C."/>
            <person name="Buchrieser C."/>
            <person name="Goebel W."/>
            <person name="Chakraborty T."/>
        </authorList>
    </citation>
    <scope>NUCLEOTIDE SEQUENCE [LARGE SCALE GENOMIC DNA]</scope>
    <source>
        <strain>CLIP80459</strain>
    </source>
</reference>